<organism>
    <name type="scientific">Gallus gallus</name>
    <name type="common">Chicken</name>
    <dbReference type="NCBI Taxonomy" id="9031"/>
    <lineage>
        <taxon>Eukaryota</taxon>
        <taxon>Metazoa</taxon>
        <taxon>Chordata</taxon>
        <taxon>Craniata</taxon>
        <taxon>Vertebrata</taxon>
        <taxon>Euteleostomi</taxon>
        <taxon>Archelosauria</taxon>
        <taxon>Archosauria</taxon>
        <taxon>Dinosauria</taxon>
        <taxon>Saurischia</taxon>
        <taxon>Theropoda</taxon>
        <taxon>Coelurosauria</taxon>
        <taxon>Aves</taxon>
        <taxon>Neognathae</taxon>
        <taxon>Galloanserae</taxon>
        <taxon>Galliformes</taxon>
        <taxon>Phasianidae</taxon>
        <taxon>Phasianinae</taxon>
        <taxon>Gallus</taxon>
    </lineage>
</organism>
<reference key="1">
    <citation type="journal article" date="2000" name="Brain Res.">
        <title>Cloning and expression of the alpha9 nicotinic acetylcholine receptor subunit in cochlear hair cells of the chick.</title>
        <authorList>
            <person name="Hiel H."/>
            <person name="Luebke A.E."/>
            <person name="Fuchs P.A."/>
        </authorList>
    </citation>
    <scope>NUCLEOTIDE SEQUENCE [MRNA]</scope>
    <scope>TISSUE SPECIFICITY</scope>
    <source>
        <tissue>Cochlea</tissue>
    </source>
</reference>
<feature type="signal peptide" evidence="3">
    <location>
        <begin position="1"/>
        <end position="27"/>
    </location>
</feature>
<feature type="chain" id="PRO_0000000373" description="Neuronal acetylcholine receptor subunit alpha-9">
    <location>
        <begin position="28"/>
        <end position="484"/>
    </location>
</feature>
<feature type="topological domain" description="Extracellular" evidence="3">
    <location>
        <begin position="28"/>
        <end position="240"/>
    </location>
</feature>
<feature type="transmembrane region" description="Helical" evidence="3">
    <location>
        <begin position="241"/>
        <end position="261"/>
    </location>
</feature>
<feature type="transmembrane region" description="Helical" evidence="3">
    <location>
        <begin position="271"/>
        <end position="291"/>
    </location>
</feature>
<feature type="transmembrane region" description="Helical" evidence="3">
    <location>
        <begin position="305"/>
        <end position="325"/>
    </location>
</feature>
<feature type="topological domain" description="Cytoplasmic" evidence="3">
    <location>
        <begin position="326"/>
        <end position="462"/>
    </location>
</feature>
<feature type="transmembrane region" description="Helical" evidence="3">
    <location>
        <begin position="463"/>
        <end position="483"/>
    </location>
</feature>
<feature type="region of interest" description="Disordered" evidence="4">
    <location>
        <begin position="364"/>
        <end position="395"/>
    </location>
</feature>
<feature type="binding site" evidence="2">
    <location>
        <position position="193"/>
    </location>
    <ligand>
        <name>Na(+)</name>
        <dbReference type="ChEBI" id="CHEBI:29101"/>
    </ligand>
</feature>
<feature type="binding site" evidence="2">
    <location>
        <position position="195"/>
    </location>
    <ligand>
        <name>Na(+)</name>
        <dbReference type="ChEBI" id="CHEBI:29101"/>
    </ligand>
</feature>
<feature type="site" description="Key residue important for potent inhibition of the CHRNA9:CHRNA10 receptor by the alpha-conotoxin RgIA (AC P0C1D0)" evidence="1">
    <location>
        <position position="148"/>
    </location>
</feature>
<feature type="glycosylation site" description="N-linked (GlcNAc...) asparagine" evidence="2">
    <location>
        <position position="59"/>
    </location>
</feature>
<feature type="glycosylation site" description="N-linked (GlcNAc...) asparagine" evidence="2">
    <location>
        <position position="172"/>
    </location>
</feature>
<feature type="disulfide bond" evidence="2">
    <location>
        <begin position="157"/>
        <end position="171"/>
    </location>
</feature>
<feature type="disulfide bond" evidence="2">
    <location>
        <begin position="221"/>
        <end position="222"/>
    </location>
</feature>
<dbReference type="EMBL" id="AF082192">
    <property type="protein sequence ID" value="AAF24618.1"/>
    <property type="molecule type" value="mRNA"/>
</dbReference>
<dbReference type="RefSeq" id="NP_990091.1">
    <property type="nucleotide sequence ID" value="NM_204760.2"/>
</dbReference>
<dbReference type="SMR" id="Q9PTS8"/>
<dbReference type="ComplexPortal" id="CPX-225">
    <property type="entry name" value="Neuronal nicotinic acetylcholine receptor complex, alpha9-alpha10"/>
</dbReference>
<dbReference type="ComplexPortal" id="CPX-229">
    <property type="entry name" value="Neuronal nicotinic acetylcholine receptor complex, alpha9"/>
</dbReference>
<dbReference type="FunCoup" id="Q9PTS8">
    <property type="interactions" value="44"/>
</dbReference>
<dbReference type="STRING" id="9031.ENSGALP00000023037"/>
<dbReference type="GlyCosmos" id="Q9PTS8">
    <property type="glycosylation" value="2 sites, No reported glycans"/>
</dbReference>
<dbReference type="GlyGen" id="Q9PTS8">
    <property type="glycosylation" value="2 sites"/>
</dbReference>
<dbReference type="PaxDb" id="9031-ENSGALP00000023037"/>
<dbReference type="GeneID" id="395522"/>
<dbReference type="KEGG" id="gga:395522"/>
<dbReference type="CTD" id="55584"/>
<dbReference type="VEuPathDB" id="HostDB:geneid_395522"/>
<dbReference type="eggNOG" id="KOG3645">
    <property type="taxonomic scope" value="Eukaryota"/>
</dbReference>
<dbReference type="HOGENOM" id="CLU_018074_0_0_1"/>
<dbReference type="InParanoid" id="Q9PTS8"/>
<dbReference type="OMA" id="CVYDVGE"/>
<dbReference type="OrthoDB" id="5975154at2759"/>
<dbReference type="PhylomeDB" id="Q9PTS8"/>
<dbReference type="TreeFam" id="TF315605"/>
<dbReference type="Reactome" id="R-GGA-629594">
    <property type="pathway name" value="Highly calcium permeable postsynaptic nicotinic acetylcholine receptors"/>
</dbReference>
<dbReference type="PRO" id="PR:Q9PTS8"/>
<dbReference type="Proteomes" id="UP000000539">
    <property type="component" value="Chromosome 4"/>
</dbReference>
<dbReference type="Bgee" id="ENSGALG00000014268">
    <property type="expression patterns" value="Expressed in granulocyte and 2 other cell types or tissues"/>
</dbReference>
<dbReference type="GO" id="GO:0043005">
    <property type="term" value="C:neuron projection"/>
    <property type="evidence" value="ECO:0000318"/>
    <property type="project" value="GO_Central"/>
</dbReference>
<dbReference type="GO" id="GO:0005886">
    <property type="term" value="C:plasma membrane"/>
    <property type="evidence" value="ECO:0000318"/>
    <property type="project" value="GO_Central"/>
</dbReference>
<dbReference type="GO" id="GO:0045211">
    <property type="term" value="C:postsynaptic membrane"/>
    <property type="evidence" value="ECO:0007669"/>
    <property type="project" value="UniProtKB-KW"/>
</dbReference>
<dbReference type="GO" id="GO:0045202">
    <property type="term" value="C:synapse"/>
    <property type="evidence" value="ECO:0000318"/>
    <property type="project" value="GO_Central"/>
</dbReference>
<dbReference type="GO" id="GO:1902495">
    <property type="term" value="C:transmembrane transporter complex"/>
    <property type="evidence" value="ECO:0000318"/>
    <property type="project" value="GO_Central"/>
</dbReference>
<dbReference type="GO" id="GO:0022848">
    <property type="term" value="F:acetylcholine-gated monoatomic cation-selective channel activity"/>
    <property type="evidence" value="ECO:0007669"/>
    <property type="project" value="InterPro"/>
</dbReference>
<dbReference type="GO" id="GO:0005262">
    <property type="term" value="F:calcium channel activity"/>
    <property type="evidence" value="ECO:0007669"/>
    <property type="project" value="UniProtKB-KW"/>
</dbReference>
<dbReference type="GO" id="GO:0005231">
    <property type="term" value="F:excitatory extracellular ligand-gated monoatomic ion channel activity"/>
    <property type="evidence" value="ECO:0000318"/>
    <property type="project" value="GO_Central"/>
</dbReference>
<dbReference type="GO" id="GO:0022850">
    <property type="term" value="F:serotonin-gated monoatomic cation channel activity"/>
    <property type="evidence" value="ECO:0000318"/>
    <property type="project" value="GO_Central"/>
</dbReference>
<dbReference type="GO" id="GO:1904315">
    <property type="term" value="F:transmitter-gated monoatomic ion channel activity involved in regulation of postsynaptic membrane potential"/>
    <property type="evidence" value="ECO:0000318"/>
    <property type="project" value="GO_Central"/>
</dbReference>
<dbReference type="GO" id="GO:0007268">
    <property type="term" value="P:chemical synaptic transmission"/>
    <property type="evidence" value="ECO:0000318"/>
    <property type="project" value="GO_Central"/>
</dbReference>
<dbReference type="GO" id="GO:0034220">
    <property type="term" value="P:monoatomic ion transmembrane transport"/>
    <property type="evidence" value="ECO:0000318"/>
    <property type="project" value="GO_Central"/>
</dbReference>
<dbReference type="GO" id="GO:0042391">
    <property type="term" value="P:regulation of membrane potential"/>
    <property type="evidence" value="ECO:0000318"/>
    <property type="project" value="GO_Central"/>
</dbReference>
<dbReference type="CDD" id="cd19022">
    <property type="entry name" value="LGIC_ECD_nAChR_A9"/>
    <property type="match status" value="1"/>
</dbReference>
<dbReference type="CDD" id="cd19051">
    <property type="entry name" value="LGIC_TM_cation"/>
    <property type="match status" value="1"/>
</dbReference>
<dbReference type="FunFam" id="1.20.58.390:FF:000009">
    <property type="entry name" value="Cholinergic receptor nicotinic alpha 9 subunit"/>
    <property type="match status" value="1"/>
</dbReference>
<dbReference type="FunFam" id="1.20.58.390:FF:000053">
    <property type="entry name" value="Neuronal acetylcholine receptor subunit alpha-9"/>
    <property type="match status" value="1"/>
</dbReference>
<dbReference type="FunFam" id="2.70.170.10:FF:000010">
    <property type="entry name" value="neuronal acetylcholine receptor subunit alpha-9"/>
    <property type="match status" value="1"/>
</dbReference>
<dbReference type="Gene3D" id="2.70.170.10">
    <property type="entry name" value="Neurotransmitter-gated ion-channel ligand-binding domain"/>
    <property type="match status" value="1"/>
</dbReference>
<dbReference type="Gene3D" id="1.20.58.390">
    <property type="entry name" value="Neurotransmitter-gated ion-channel transmembrane domain"/>
    <property type="match status" value="2"/>
</dbReference>
<dbReference type="InterPro" id="IPR006202">
    <property type="entry name" value="Neur_chan_lig-bd"/>
</dbReference>
<dbReference type="InterPro" id="IPR036734">
    <property type="entry name" value="Neur_chan_lig-bd_sf"/>
</dbReference>
<dbReference type="InterPro" id="IPR006201">
    <property type="entry name" value="Neur_channel"/>
</dbReference>
<dbReference type="InterPro" id="IPR036719">
    <property type="entry name" value="Neuro-gated_channel_TM_sf"/>
</dbReference>
<dbReference type="InterPro" id="IPR038050">
    <property type="entry name" value="Neuro_actylchol_rec"/>
</dbReference>
<dbReference type="InterPro" id="IPR006029">
    <property type="entry name" value="Neurotrans-gated_channel_TM"/>
</dbReference>
<dbReference type="InterPro" id="IPR018000">
    <property type="entry name" value="Neurotransmitter_ion_chnl_CS"/>
</dbReference>
<dbReference type="InterPro" id="IPR002394">
    <property type="entry name" value="Nicotinic_acetylcholine_rcpt"/>
</dbReference>
<dbReference type="NCBIfam" id="TIGR00860">
    <property type="entry name" value="LIC"/>
    <property type="match status" value="1"/>
</dbReference>
<dbReference type="PANTHER" id="PTHR18945">
    <property type="entry name" value="NEUROTRANSMITTER GATED ION CHANNEL"/>
    <property type="match status" value="1"/>
</dbReference>
<dbReference type="Pfam" id="PF02931">
    <property type="entry name" value="Neur_chan_LBD"/>
    <property type="match status" value="1"/>
</dbReference>
<dbReference type="Pfam" id="PF02932">
    <property type="entry name" value="Neur_chan_memb"/>
    <property type="match status" value="1"/>
</dbReference>
<dbReference type="PRINTS" id="PR00254">
    <property type="entry name" value="NICOTINICR"/>
</dbReference>
<dbReference type="PRINTS" id="PR00252">
    <property type="entry name" value="NRIONCHANNEL"/>
</dbReference>
<dbReference type="SUPFAM" id="SSF90112">
    <property type="entry name" value="Neurotransmitter-gated ion-channel transmembrane pore"/>
    <property type="match status" value="1"/>
</dbReference>
<dbReference type="SUPFAM" id="SSF63712">
    <property type="entry name" value="Nicotinic receptor ligand binding domain-like"/>
    <property type="match status" value="1"/>
</dbReference>
<dbReference type="PROSITE" id="PS00236">
    <property type="entry name" value="NEUROTR_ION_CHANNEL"/>
    <property type="match status" value="1"/>
</dbReference>
<evidence type="ECO:0000250" key="1">
    <source>
        <dbReference type="UniProtKB" id="P43144"/>
    </source>
</evidence>
<evidence type="ECO:0000250" key="2">
    <source>
        <dbReference type="UniProtKB" id="Q9UGM1"/>
    </source>
</evidence>
<evidence type="ECO:0000255" key="3"/>
<evidence type="ECO:0000256" key="4">
    <source>
        <dbReference type="SAM" id="MobiDB-lite"/>
    </source>
</evidence>
<evidence type="ECO:0000269" key="5">
    <source>
    </source>
</evidence>
<evidence type="ECO:0000305" key="6"/>
<proteinExistence type="evidence at protein level"/>
<accession>Q9PTS8</accession>
<protein>
    <recommendedName>
        <fullName>Neuronal acetylcholine receptor subunit alpha-9</fullName>
    </recommendedName>
    <alternativeName>
        <fullName>Nicotinic acetylcholine receptor subunit alpha-9</fullName>
        <shortName>NACHR alpha-9</shortName>
    </alternativeName>
</protein>
<name>ACHA9_CHICK</name>
<sequence length="484" mass="55286">MKRNNLSSFYVSLWLLFTATMLQAVESAKGKYAQMLFNELFEDYSNALRPVEDTDKVLNVTLQITLSQIKDMDERNQILTAYLWIRQSWYDAYLKWDKDKYDGLDSIRIPSNLVWRPDIVLYNKADDDFSEPVNTNVVLRYDGKITWDAPAITKSSCVVDVSYFPFDSQQCNLTFGSWTYNGNQVDIINSLDSGDLSDFVEDVEWEIHGMPAVKNVITYGCCSEPYPDVTFTLILKRKSSFYIFNLLLPCILISFLAPLGFYLPADSGEKVSLGVTVLLALTVFQLMVAEIMPPSENVPLIGKYYIATMTMITASTALTIIIMNVHHCGSEAKPVPQWARVVILDYMSKIFFVYDVGENCTSPRREKEQEHRLEGGDMCRGGDGKSHLSSRNDDSDLKENLNGNWNKSFGVHGENVRENVNCCSCYKMLIKNIEYIANCVRDHKANRAKGIEWKKVAKVMDRFFMWIFFIMVFFMSVLIIGKAA</sequence>
<comment type="function">
    <text evidence="1 2">Component of neuronal acetylcholine receptors (nAChRs) that function as pentameric, ligand-gated cation channels with high calcium permeability among other activities. nAChRs are excitatory neurotrasnmitter receptors formed by a collection of nAChR subunits known to mediate synaptic transmission in the nervous system and the neuromuscular junction. Each nAchR subunit confers differential attributes to channel properties, including activation, deactivation and desensitization kinetics, pH sensitivity, cation permeability, and binding to allosteric modulators. Forms either homopentamers or heteropentamers with CHRNA10. Expressed in the inner ear, in sympathetic neurons and in other non-neuronal cells, such as skin keratinocytes and lymphocytes (By similarity). The channel is permeable to a range of divalent cations including calcium, the influx of which may activate a potassium current which hyperpolarizes the cell membrane (By similarity).</text>
</comment>
<comment type="catalytic activity">
    <reaction evidence="2">
        <text>Ca(2+)(in) = Ca(2+)(out)</text>
        <dbReference type="Rhea" id="RHEA:29671"/>
        <dbReference type="ChEBI" id="CHEBI:29108"/>
    </reaction>
</comment>
<comment type="catalytic activity">
    <reaction evidence="1">
        <text>K(+)(in) = K(+)(out)</text>
        <dbReference type="Rhea" id="RHEA:29463"/>
        <dbReference type="ChEBI" id="CHEBI:29103"/>
    </reaction>
</comment>
<comment type="catalytic activity">
    <reaction evidence="1">
        <text>Na(+)(in) = Na(+)(out)</text>
        <dbReference type="Rhea" id="RHEA:34963"/>
        <dbReference type="ChEBI" id="CHEBI:29101"/>
    </reaction>
</comment>
<comment type="catalytic activity">
    <reaction evidence="1">
        <text>Mg(2+)(in) = Mg(2+)(out)</text>
        <dbReference type="Rhea" id="RHEA:29827"/>
        <dbReference type="ChEBI" id="CHEBI:18420"/>
    </reaction>
</comment>
<comment type="activity regulation">
    <text evidence="2">Activated by a myriad of ligands such as acetylcholine. AChR activity is inhibited by the antagonist alpha-conotoxins RgIA and GeXXA, small disulfide-constrained peptides from cone snails.</text>
</comment>
<comment type="subunit">
    <text evidence="1 2">Forms homo- or heteropentameric channels in conjunction with CHRNA10. The native outer hair cell receptor is composed of CHRNA9:CHRNA10 heterooligomers (By similarity). Found in the stoichiometric form (CHRNA9)2:(CHRNA10)3 (By similarity).</text>
</comment>
<comment type="subcellular location">
    <subcellularLocation>
        <location evidence="2">Synaptic cell membrane</location>
        <topology evidence="3">Multi-pass membrane protein</topology>
    </subcellularLocation>
    <subcellularLocation>
        <location evidence="2">Cell membrane</location>
        <topology evidence="3">Multi-pass membrane protein</topology>
    </subcellularLocation>
</comment>
<comment type="tissue specificity">
    <text evidence="5">Expressed in hair cells of the cochlea (at protein level). Expressed in hair cells of the cochlea.</text>
</comment>
<comment type="similarity">
    <text evidence="6">Belongs to the ligand-gated ion channel (TC 1.A.9) family. Acetylcholine receptor (TC 1.A.9.1) subfamily. Alpha-9/CHRNA9 sub-subfamily.</text>
</comment>
<keyword id="KW-0106">Calcium</keyword>
<keyword id="KW-0107">Calcium channel</keyword>
<keyword id="KW-0109">Calcium transport</keyword>
<keyword id="KW-1003">Cell membrane</keyword>
<keyword id="KW-1015">Disulfide bond</keyword>
<keyword id="KW-0325">Glycoprotein</keyword>
<keyword id="KW-0407">Ion channel</keyword>
<keyword id="KW-0406">Ion transport</keyword>
<keyword id="KW-1071">Ligand-gated ion channel</keyword>
<keyword id="KW-0472">Membrane</keyword>
<keyword id="KW-0479">Metal-binding</keyword>
<keyword id="KW-0675">Receptor</keyword>
<keyword id="KW-1185">Reference proteome</keyword>
<keyword id="KW-0732">Signal</keyword>
<keyword id="KW-0915">Sodium</keyword>
<keyword id="KW-0770">Synapse</keyword>
<keyword id="KW-0812">Transmembrane</keyword>
<keyword id="KW-1133">Transmembrane helix</keyword>
<keyword id="KW-0813">Transport</keyword>
<gene>
    <name type="primary">CHRNA9</name>
</gene>